<name>PSB30_STAPU</name>
<sequence length="33" mass="3496">MNLEVVAQLTALAFIVLSGPLVIALLAFRKGNL</sequence>
<reference key="1">
    <citation type="journal article" date="2005" name="BMC Biol.">
        <title>The complete chloroplast DNA sequences of the charophycean green algae Staurastrum and Zygnema reveal that the chloroplast genome underwent extensive changes during the evolution of the Zygnematales.</title>
        <authorList>
            <person name="Turmel M."/>
            <person name="Otis C."/>
            <person name="Lemieux C."/>
        </authorList>
    </citation>
    <scope>NUCLEOTIDE SEQUENCE [LARGE SCALE GENOMIC DNA]</scope>
</reference>
<dbReference type="EMBL" id="AY958085">
    <property type="protein sequence ID" value="AAX45763.1"/>
    <property type="molecule type" value="Genomic_DNA"/>
</dbReference>
<dbReference type="RefSeq" id="YP_636407.1">
    <property type="nucleotide sequence ID" value="NC_008116.1"/>
</dbReference>
<dbReference type="SMR" id="Q32RW9"/>
<dbReference type="GeneID" id="4108636"/>
<dbReference type="GO" id="GO:0009535">
    <property type="term" value="C:chloroplast thylakoid membrane"/>
    <property type="evidence" value="ECO:0007669"/>
    <property type="project" value="UniProtKB-SubCell"/>
</dbReference>
<dbReference type="GO" id="GO:0009523">
    <property type="term" value="C:photosystem II"/>
    <property type="evidence" value="ECO:0007669"/>
    <property type="project" value="UniProtKB-KW"/>
</dbReference>
<dbReference type="GO" id="GO:0015979">
    <property type="term" value="P:photosynthesis"/>
    <property type="evidence" value="ECO:0007669"/>
    <property type="project" value="UniProtKB-KW"/>
</dbReference>
<dbReference type="HAMAP" id="MF_01329">
    <property type="entry name" value="PSII_Psb30_Ycf12"/>
    <property type="match status" value="1"/>
</dbReference>
<dbReference type="InterPro" id="IPR010284">
    <property type="entry name" value="PSII_Ycf12_core-subunit"/>
</dbReference>
<dbReference type="NCBIfam" id="NF010239">
    <property type="entry name" value="PRK13686.1"/>
    <property type="match status" value="1"/>
</dbReference>
<dbReference type="Pfam" id="PF05969">
    <property type="entry name" value="PSII_Ycf12"/>
    <property type="match status" value="1"/>
</dbReference>
<protein>
    <recommendedName>
        <fullName evidence="1">Photosystem II reaction center protein Psb30</fullName>
    </recommendedName>
    <alternativeName>
        <fullName evidence="1">Photosystem II reaction center protein Ycf12</fullName>
    </alternativeName>
</protein>
<geneLocation type="chloroplast"/>
<comment type="function">
    <text evidence="1">A core subunit of photosystem II (PSII), probably helps stabilize the reaction center.</text>
</comment>
<comment type="subunit">
    <text evidence="1">PSII is composed of 1 copy each of membrane proteins PsbA, PsbB, PsbC, PsbD, PsbE, PsbF, PsbH, PsbI, PsbJ, PsbK, PsbL, PsbM, PsbT, PsbX, PsbY, PsbZ, Psb30/Ycf12, peripheral proteins of the oxygen-evolving complex and a large number of cofactors. It forms dimeric complexes.</text>
</comment>
<comment type="subcellular location">
    <subcellularLocation>
        <location evidence="1">Plastid</location>
        <location evidence="1">Chloroplast thylakoid membrane</location>
        <topology evidence="1">Single-pass membrane protein</topology>
    </subcellularLocation>
</comment>
<comment type="similarity">
    <text evidence="1">Belongs to the Psb30/Ycf12 family.</text>
</comment>
<evidence type="ECO:0000255" key="1">
    <source>
        <dbReference type="HAMAP-Rule" id="MF_01329"/>
    </source>
</evidence>
<accession>Q32RW9</accession>
<feature type="chain" id="PRO_0000242476" description="Photosystem II reaction center protein Psb30">
    <location>
        <begin position="1"/>
        <end position="33"/>
    </location>
</feature>
<feature type="transmembrane region" description="Helical" evidence="1">
    <location>
        <begin position="8"/>
        <end position="28"/>
    </location>
</feature>
<gene>
    <name evidence="1" type="primary">psb30</name>
    <name evidence="1" type="synonym">ycf12</name>
</gene>
<keyword id="KW-0150">Chloroplast</keyword>
<keyword id="KW-0472">Membrane</keyword>
<keyword id="KW-0602">Photosynthesis</keyword>
<keyword id="KW-0604">Photosystem II</keyword>
<keyword id="KW-0934">Plastid</keyword>
<keyword id="KW-0793">Thylakoid</keyword>
<keyword id="KW-0812">Transmembrane</keyword>
<keyword id="KW-1133">Transmembrane helix</keyword>
<proteinExistence type="inferred from homology"/>
<organism>
    <name type="scientific">Staurastrum punctulatum</name>
    <name type="common">Green alga</name>
    <name type="synonym">Cosmoastrum punctulatum</name>
    <dbReference type="NCBI Taxonomy" id="102822"/>
    <lineage>
        <taxon>Eukaryota</taxon>
        <taxon>Viridiplantae</taxon>
        <taxon>Streptophyta</taxon>
        <taxon>Zygnematophyceae</taxon>
        <taxon>Zygnematophycidae</taxon>
        <taxon>Desmidiales</taxon>
        <taxon>Desmidiaceae</taxon>
        <taxon>Staurastrum</taxon>
    </lineage>
</organism>